<name>APOA1_ODORO</name>
<accession>P0DMS6</accession>
<gene>
    <name type="primary">APOA1</name>
</gene>
<comment type="function">
    <text evidence="3">Participates in the reverse transport of cholesterol from tissues to the liver for excretion by promoting cholesterol efflux from tissues and by acting as a cofactor for the lecithin cholesterol acyltransferase (LCAT). As part of the SPAP complex, activates spermatozoa motility.</text>
</comment>
<comment type="subunit">
    <text evidence="2 3 5">Homodimer (By similarity). Interacts with APOA1BP and CLU. Component of a sperm activating protein complex (SPAP), consisting of APOA1, an immunoglobulin heavy chain, an immunoglobulin light chain and albumin. Interacts with NDRG1. Interacts with SCGB3A2 (By similarity). Interacts with NAXE and YJEFN3 (By similarity).</text>
</comment>
<comment type="subcellular location">
    <subcellularLocation>
        <location evidence="3">Secreted</location>
    </subcellularLocation>
</comment>
<comment type="PTM">
    <text evidence="4">Glycosylated.</text>
</comment>
<comment type="PTM">
    <text evidence="4">Palmitoylated.</text>
</comment>
<comment type="PTM">
    <text evidence="1">Phosphorylation sites are present in the extracellular medium.</text>
</comment>
<comment type="similarity">
    <text evidence="7">Belongs to the apolipoprotein A1/A4/E family.</text>
</comment>
<feature type="signal peptide" evidence="6">
    <location>
        <begin position="1"/>
        <end position="18"/>
    </location>
</feature>
<feature type="chain" id="PRO_0000432016" description="Proapolipoprotein A-I">
    <location>
        <begin position="19"/>
        <end position="266"/>
    </location>
</feature>
<feature type="chain" id="PRO_0000432017" description="Apolipoprotein A-I">
    <location>
        <begin position="25"/>
        <end position="266"/>
    </location>
</feature>
<feature type="chain" id="PRO_0000432018" description="Truncated apolipoprotein A-I" evidence="3">
    <location>
        <begin position="25"/>
        <end position="265"/>
    </location>
</feature>
<feature type="repeat" description="1">
    <location>
        <begin position="67"/>
        <end position="88"/>
    </location>
</feature>
<feature type="repeat" description="2">
    <location>
        <begin position="89"/>
        <end position="110"/>
    </location>
</feature>
<feature type="repeat" description="3; half-length">
    <location>
        <begin position="111"/>
        <end position="121"/>
    </location>
</feature>
<feature type="repeat" description="4">
    <location>
        <begin position="122"/>
        <end position="143"/>
    </location>
</feature>
<feature type="repeat" description="5">
    <location>
        <begin position="144"/>
        <end position="165"/>
    </location>
</feature>
<feature type="repeat" description="6">
    <location>
        <begin position="166"/>
        <end position="187"/>
    </location>
</feature>
<feature type="repeat" description="7">
    <location>
        <begin position="188"/>
        <end position="209"/>
    </location>
</feature>
<feature type="repeat" description="8">
    <location>
        <begin position="210"/>
        <end position="231"/>
    </location>
</feature>
<feature type="repeat" description="9; half-length">
    <location>
        <begin position="232"/>
        <end position="242"/>
    </location>
</feature>
<feature type="repeat" description="10">
    <location>
        <begin position="243"/>
        <end position="266"/>
    </location>
</feature>
<feature type="region of interest" description="10 X approximate tandem repeats">
    <location>
        <begin position="67"/>
        <end position="266"/>
    </location>
</feature>
<feature type="modified residue" description="Methionine sulfoxide" evidence="3">
    <location>
        <position position="109"/>
    </location>
</feature>
<organism>
    <name type="scientific">Odobenus rosmarus divergens</name>
    <name type="common">Pacific walrus</name>
    <dbReference type="NCBI Taxonomy" id="9708"/>
    <lineage>
        <taxon>Eukaryota</taxon>
        <taxon>Metazoa</taxon>
        <taxon>Chordata</taxon>
        <taxon>Craniata</taxon>
        <taxon>Vertebrata</taxon>
        <taxon>Euteleostomi</taxon>
        <taxon>Mammalia</taxon>
        <taxon>Eutheria</taxon>
        <taxon>Laurasiatheria</taxon>
        <taxon>Carnivora</taxon>
        <taxon>Caniformia</taxon>
        <taxon>Pinnipedia</taxon>
        <taxon>Odobenidae</taxon>
        <taxon>Odobenus</taxon>
    </lineage>
</organism>
<evidence type="ECO:0000250" key="1"/>
<evidence type="ECO:0000250" key="2">
    <source>
        <dbReference type="UniProtKB" id="G5BQH5"/>
    </source>
</evidence>
<evidence type="ECO:0000250" key="3">
    <source>
        <dbReference type="UniProtKB" id="P02647"/>
    </source>
</evidence>
<evidence type="ECO:0000250" key="4">
    <source>
        <dbReference type="UniProtKB" id="P02648"/>
    </source>
</evidence>
<evidence type="ECO:0000250" key="5">
    <source>
        <dbReference type="UniProtKB" id="P04639"/>
    </source>
</evidence>
<evidence type="ECO:0000255" key="6"/>
<evidence type="ECO:0000305" key="7"/>
<protein>
    <recommendedName>
        <fullName>Apolipoprotein A-I</fullName>
        <shortName>Apo-AI</shortName>
        <shortName>ApoA-I</shortName>
    </recommendedName>
    <alternativeName>
        <fullName>Apolipoprotein A1</fullName>
    </alternativeName>
    <component>
        <recommendedName>
            <fullName>Proapolipoprotein A-I</fullName>
            <shortName>ProapoA-I</shortName>
        </recommendedName>
    </component>
    <component>
        <recommendedName>
            <fullName>Truncated apolipoprotein A-I</fullName>
        </recommendedName>
    </component>
</protein>
<dbReference type="EMBL" id="ANOP01055729">
    <property type="status" value="NOT_ANNOTATED_CDS"/>
    <property type="molecule type" value="Genomic_DNA"/>
</dbReference>
<dbReference type="RefSeq" id="XP_004415532.1">
    <property type="nucleotide sequence ID" value="XM_004415475.1"/>
</dbReference>
<dbReference type="RefSeq" id="XP_012423227.1">
    <property type="nucleotide sequence ID" value="XM_012567773.1"/>
</dbReference>
<dbReference type="SMR" id="P0DMS6"/>
<dbReference type="FunCoup" id="P0DMS6">
    <property type="interactions" value="2"/>
</dbReference>
<dbReference type="STRING" id="9708.P0DMS6"/>
<dbReference type="GeneID" id="101382508"/>
<dbReference type="KEGG" id="oro:101382508"/>
<dbReference type="CTD" id="335"/>
<dbReference type="InParanoid" id="P0DMS6"/>
<dbReference type="OrthoDB" id="16260at33554"/>
<dbReference type="Proteomes" id="UP000245340">
    <property type="component" value="Unplaced"/>
</dbReference>
<dbReference type="GO" id="GO:0042627">
    <property type="term" value="C:chylomicron"/>
    <property type="evidence" value="ECO:0007669"/>
    <property type="project" value="TreeGrafter"/>
</dbReference>
<dbReference type="GO" id="GO:1903561">
    <property type="term" value="C:extracellular vesicle"/>
    <property type="evidence" value="ECO:0007669"/>
    <property type="project" value="TreeGrafter"/>
</dbReference>
<dbReference type="GO" id="GO:0034364">
    <property type="term" value="C:high-density lipoprotein particle"/>
    <property type="evidence" value="ECO:0007669"/>
    <property type="project" value="UniProtKB-KW"/>
</dbReference>
<dbReference type="GO" id="GO:0034362">
    <property type="term" value="C:low-density lipoprotein particle"/>
    <property type="evidence" value="ECO:0007669"/>
    <property type="project" value="TreeGrafter"/>
</dbReference>
<dbReference type="GO" id="GO:0034361">
    <property type="term" value="C:very-low-density lipoprotein particle"/>
    <property type="evidence" value="ECO:0007669"/>
    <property type="project" value="TreeGrafter"/>
</dbReference>
<dbReference type="GO" id="GO:0120020">
    <property type="term" value="F:cholesterol transfer activity"/>
    <property type="evidence" value="ECO:0007669"/>
    <property type="project" value="TreeGrafter"/>
</dbReference>
<dbReference type="GO" id="GO:0060228">
    <property type="term" value="F:phosphatidylcholine-sterol O-acyltransferase activator activity"/>
    <property type="evidence" value="ECO:0007669"/>
    <property type="project" value="TreeGrafter"/>
</dbReference>
<dbReference type="GO" id="GO:0005543">
    <property type="term" value="F:phospholipid binding"/>
    <property type="evidence" value="ECO:0007669"/>
    <property type="project" value="TreeGrafter"/>
</dbReference>
<dbReference type="GO" id="GO:0042803">
    <property type="term" value="F:protein homodimerization activity"/>
    <property type="evidence" value="ECO:0000250"/>
    <property type="project" value="UniProtKB"/>
</dbReference>
<dbReference type="GO" id="GO:0055090">
    <property type="term" value="P:acylglycerol homeostasis"/>
    <property type="evidence" value="ECO:0007669"/>
    <property type="project" value="TreeGrafter"/>
</dbReference>
<dbReference type="GO" id="GO:0033344">
    <property type="term" value="P:cholesterol efflux"/>
    <property type="evidence" value="ECO:0007669"/>
    <property type="project" value="TreeGrafter"/>
</dbReference>
<dbReference type="GO" id="GO:0008203">
    <property type="term" value="P:cholesterol metabolic process"/>
    <property type="evidence" value="ECO:0007669"/>
    <property type="project" value="UniProtKB-KW"/>
</dbReference>
<dbReference type="GO" id="GO:0042157">
    <property type="term" value="P:lipoprotein metabolic process"/>
    <property type="evidence" value="ECO:0007669"/>
    <property type="project" value="InterPro"/>
</dbReference>
<dbReference type="GO" id="GO:0033700">
    <property type="term" value="P:phospholipid efflux"/>
    <property type="evidence" value="ECO:0007669"/>
    <property type="project" value="TreeGrafter"/>
</dbReference>
<dbReference type="GO" id="GO:0010875">
    <property type="term" value="P:positive regulation of cholesterol efflux"/>
    <property type="evidence" value="ECO:0000250"/>
    <property type="project" value="UniProtKB"/>
</dbReference>
<dbReference type="GO" id="GO:0050766">
    <property type="term" value="P:positive regulation of phagocytosis"/>
    <property type="evidence" value="ECO:0000250"/>
    <property type="project" value="UniProtKB"/>
</dbReference>
<dbReference type="GO" id="GO:1902995">
    <property type="term" value="P:positive regulation of phospholipid efflux"/>
    <property type="evidence" value="ECO:0000250"/>
    <property type="project" value="UniProtKB"/>
</dbReference>
<dbReference type="GO" id="GO:0050821">
    <property type="term" value="P:protein stabilization"/>
    <property type="evidence" value="ECO:0000250"/>
    <property type="project" value="UniProtKB"/>
</dbReference>
<dbReference type="FunFam" id="1.20.120.20:FF:000001">
    <property type="entry name" value="Apolipoprotein A-I"/>
    <property type="match status" value="1"/>
</dbReference>
<dbReference type="FunFam" id="1.20.5.20:FF:000001">
    <property type="entry name" value="apolipoprotein A-I"/>
    <property type="match status" value="1"/>
</dbReference>
<dbReference type="Gene3D" id="1.20.5.20">
    <property type="match status" value="1"/>
</dbReference>
<dbReference type="Gene3D" id="6.10.140.380">
    <property type="match status" value="1"/>
</dbReference>
<dbReference type="Gene3D" id="1.20.120.20">
    <property type="entry name" value="Apolipoprotein"/>
    <property type="match status" value="1"/>
</dbReference>
<dbReference type="InterPro" id="IPR000074">
    <property type="entry name" value="ApoA_E"/>
</dbReference>
<dbReference type="InterPro" id="IPR050163">
    <property type="entry name" value="Apolipoprotein_A1/A4/E"/>
</dbReference>
<dbReference type="PANTHER" id="PTHR18976">
    <property type="entry name" value="APOLIPOPROTEIN"/>
    <property type="match status" value="1"/>
</dbReference>
<dbReference type="PANTHER" id="PTHR18976:SF11">
    <property type="entry name" value="APOLIPOPROTEIN A-I"/>
    <property type="match status" value="1"/>
</dbReference>
<dbReference type="Pfam" id="PF01442">
    <property type="entry name" value="Apolipoprotein"/>
    <property type="match status" value="1"/>
</dbReference>
<dbReference type="SUPFAM" id="SSF58113">
    <property type="entry name" value="Apolipoprotein A-I"/>
    <property type="match status" value="1"/>
</dbReference>
<proteinExistence type="inferred from homology"/>
<sequence>MKAVVLTLAVLFLTGSQARHFWQQDEPQSPWDRVKDLATVYVDVVKDGGRDYVAQFEASALGKQLNLKLLDNWDTLSSTVAKLREQIGPVTQEFWDNLEKETEVLRQEMNKDLEEVKKKVQPYLDEFQSKWHEEVELYRQKVAPLGAELSEGARQKLQELQEKLSPLGEELRDRARTHVDALRAQLAPYSDQLRERLATRLQALKEGGGAALAEYHAKASEQLSVLREKAKPALEDLRQGLLPVLESFRTSLLAAVDEATKKLNAQ</sequence>
<reference key="1">
    <citation type="submission" date="2012-11" db="EMBL/GenBank/DDBJ databases">
        <authorList>
            <person name="Foote A.D."/>
            <person name="Gilbert M.T.P."/>
            <person name="Liu Y."/>
            <person name="Lee S.L."/>
            <person name="Dugan-Rocha S."/>
            <person name="Jhangiani S."/>
            <person name="Bandaranaike D."/>
            <person name="Batterton M."/>
            <person name="Bellair M."/>
            <person name="Bess C."/>
            <person name="Blankenburg K."/>
            <person name="Chao H."/>
            <person name="Denson S."/>
            <person name="Dinh H."/>
            <person name="Elkadiri S."/>
            <person name="Fu Q."/>
            <person name="Hernandez B."/>
            <person name="Javaid M."/>
            <person name="Jayaseelan J.C."/>
            <person name="Lee S."/>
            <person name="Li M."/>
            <person name="Liu X."/>
            <person name="Matskevitch T."/>
            <person name="Munidasa M."/>
            <person name="Najjar R."/>
            <person name="Nguyen L."/>
            <person name="Ongeri F."/>
            <person name="Osuji N."/>
            <person name="Perales L."/>
            <person name="Pu L.-L."/>
            <person name="Puazo M."/>
            <person name="Qi S."/>
            <person name="Qu C."/>
            <person name="Quiroz J."/>
            <person name="Raj R."/>
            <person name="Shafer J."/>
            <person name="Shen H."/>
            <person name="Tabassum N."/>
            <person name="Tang L.-Y."/>
            <person name="Taylor A."/>
            <person name="Weissenberger G."/>
            <person name="Wu Y.-Q."/>
            <person name="Xin Y."/>
            <person name="Zhang Y."/>
            <person name="Zhu Y."/>
            <person name="Zou X."/>
            <person name="Muzny D."/>
            <person name="Worley K."/>
            <person name="Gibbs R."/>
        </authorList>
    </citation>
    <scope>NUCLEOTIDE SEQUENCE [LARGE SCALE GENOMIC DNA]</scope>
</reference>
<reference key="2">
    <citation type="unpublished observations" date="2014-12">
        <authorList>
            <person name="Puppione D.L."/>
        </authorList>
    </citation>
    <scope>IDENTIFICATION</scope>
</reference>
<keyword id="KW-0153">Cholesterol metabolism</keyword>
<keyword id="KW-0325">Glycoprotein</keyword>
<keyword id="KW-0345">HDL</keyword>
<keyword id="KW-0443">Lipid metabolism</keyword>
<keyword id="KW-0445">Lipid transport</keyword>
<keyword id="KW-0449">Lipoprotein</keyword>
<keyword id="KW-0558">Oxidation</keyword>
<keyword id="KW-0564">Palmitate</keyword>
<keyword id="KW-0597">Phosphoprotein</keyword>
<keyword id="KW-1185">Reference proteome</keyword>
<keyword id="KW-0677">Repeat</keyword>
<keyword id="KW-0964">Secreted</keyword>
<keyword id="KW-0732">Signal</keyword>
<keyword id="KW-0753">Steroid metabolism</keyword>
<keyword id="KW-1207">Sterol metabolism</keyword>
<keyword id="KW-0813">Transport</keyword>